<protein>
    <recommendedName>
        <fullName>Anthranilate N-methyltransferase</fullName>
        <shortName>RgANMT</shortName>
        <ecNumber>2.1.1.111</ecNumber>
    </recommendedName>
</protein>
<name>ANMT_RUTGR</name>
<accession>A9X7L0</accession>
<dbReference type="EC" id="2.1.1.111"/>
<dbReference type="EMBL" id="DQ884932">
    <property type="protein sequence ID" value="ABI93949.1"/>
    <property type="molecule type" value="mRNA"/>
</dbReference>
<dbReference type="SMR" id="A9X7L0"/>
<dbReference type="KEGG" id="ag:ABI93949"/>
<dbReference type="BioCyc" id="MetaCyc:MONOMER-14024"/>
<dbReference type="BRENDA" id="2.1.1.111">
    <property type="organism ID" value="5486"/>
</dbReference>
<dbReference type="GO" id="GO:0030774">
    <property type="term" value="F:anthranilate N-methyltransferase activity"/>
    <property type="evidence" value="ECO:0007669"/>
    <property type="project" value="UniProtKB-EC"/>
</dbReference>
<dbReference type="GO" id="GO:0008171">
    <property type="term" value="F:O-methyltransferase activity"/>
    <property type="evidence" value="ECO:0007669"/>
    <property type="project" value="InterPro"/>
</dbReference>
<dbReference type="GO" id="GO:0046983">
    <property type="term" value="F:protein dimerization activity"/>
    <property type="evidence" value="ECO:0007669"/>
    <property type="project" value="InterPro"/>
</dbReference>
<dbReference type="GO" id="GO:0032259">
    <property type="term" value="P:methylation"/>
    <property type="evidence" value="ECO:0007669"/>
    <property type="project" value="UniProtKB-KW"/>
</dbReference>
<dbReference type="CDD" id="cd02440">
    <property type="entry name" value="AdoMet_MTases"/>
    <property type="match status" value="1"/>
</dbReference>
<dbReference type="FunFam" id="1.10.10.10:FF:000357">
    <property type="entry name" value="Caffeic acid 3-O-methyltransferase"/>
    <property type="match status" value="1"/>
</dbReference>
<dbReference type="FunFam" id="3.40.50.150:FF:000061">
    <property type="entry name" value="Caffeic acid O-methyltransferase"/>
    <property type="match status" value="1"/>
</dbReference>
<dbReference type="Gene3D" id="3.40.50.150">
    <property type="entry name" value="Vaccinia Virus protein VP39"/>
    <property type="match status" value="1"/>
</dbReference>
<dbReference type="Gene3D" id="1.10.10.10">
    <property type="entry name" value="Winged helix-like DNA-binding domain superfamily/Winged helix DNA-binding domain"/>
    <property type="match status" value="1"/>
</dbReference>
<dbReference type="InterPro" id="IPR016461">
    <property type="entry name" value="COMT-like"/>
</dbReference>
<dbReference type="InterPro" id="IPR001077">
    <property type="entry name" value="O_MeTrfase_dom"/>
</dbReference>
<dbReference type="InterPro" id="IPR012967">
    <property type="entry name" value="Plant_O-MeTrfase_dimerisation"/>
</dbReference>
<dbReference type="InterPro" id="IPR029063">
    <property type="entry name" value="SAM-dependent_MTases_sf"/>
</dbReference>
<dbReference type="InterPro" id="IPR036388">
    <property type="entry name" value="WH-like_DNA-bd_sf"/>
</dbReference>
<dbReference type="InterPro" id="IPR036390">
    <property type="entry name" value="WH_DNA-bd_sf"/>
</dbReference>
<dbReference type="PANTHER" id="PTHR11746">
    <property type="entry name" value="O-METHYLTRANSFERASE"/>
    <property type="match status" value="1"/>
</dbReference>
<dbReference type="Pfam" id="PF08100">
    <property type="entry name" value="Dimerisation"/>
    <property type="match status" value="1"/>
</dbReference>
<dbReference type="Pfam" id="PF00891">
    <property type="entry name" value="Methyltransf_2"/>
    <property type="match status" value="1"/>
</dbReference>
<dbReference type="PIRSF" id="PIRSF005739">
    <property type="entry name" value="O-mtase"/>
    <property type="match status" value="1"/>
</dbReference>
<dbReference type="SUPFAM" id="SSF53335">
    <property type="entry name" value="S-adenosyl-L-methionine-dependent methyltransferases"/>
    <property type="match status" value="1"/>
</dbReference>
<dbReference type="SUPFAM" id="SSF46785">
    <property type="entry name" value="Winged helix' DNA-binding domain"/>
    <property type="match status" value="1"/>
</dbReference>
<dbReference type="PROSITE" id="PS51683">
    <property type="entry name" value="SAM_OMT_II"/>
    <property type="match status" value="1"/>
</dbReference>
<sequence length="364" mass="40059">MGSLSESHTQYKHGVEVEEDEEESYSRAMQLSMAIVLPMATQSAIQLGVFEIIAKAPGGRLSASEIATILQAQNPKAPVMLDRMLRLLVSHRVLDCSVSGPAGERLYGLTSVSKYFVPDQDGASLGNFMALPLDKVFMESWMGVKGAVMEGGIPFNRVHGMHIFEYASSNSKFSDTYHRAMFNHSTIALKRILEHYKGFENVTKLVDVGGGLGVTLSMIASKYPHIQAINFDLPHVVQDAASYPGVEHVGGNMFESVPEGDAILMKWILHCWDDEQCLRILKNCYKATPENGKVIVMNSVVPETPEVSSSARETSLLDVLLMTRDGGGRERTQKEFTELAIGAGFKGINFACCVCNLHIMEFFK</sequence>
<feature type="chain" id="PRO_0000411115" description="Anthranilate N-methyltransferase">
    <location>
        <begin position="1"/>
        <end position="364"/>
    </location>
</feature>
<feature type="region of interest" description="Disordered" evidence="2">
    <location>
        <begin position="1"/>
        <end position="20"/>
    </location>
</feature>
<feature type="active site" description="Proton acceptor" evidence="1">
    <location>
        <position position="270"/>
    </location>
</feature>
<feature type="binding site" evidence="1">
    <location>
        <position position="209"/>
    </location>
    <ligand>
        <name>S-adenosyl-L-methionine</name>
        <dbReference type="ChEBI" id="CHEBI:59789"/>
    </ligand>
</feature>
<feature type="binding site" evidence="1">
    <location>
        <position position="232"/>
    </location>
    <ligand>
        <name>S-adenosyl-L-methionine</name>
        <dbReference type="ChEBI" id="CHEBI:59789"/>
    </ligand>
</feature>
<feature type="binding site" evidence="1">
    <location>
        <position position="253"/>
    </location>
    <ligand>
        <name>S-adenosyl-L-methionine</name>
        <dbReference type="ChEBI" id="CHEBI:59789"/>
    </ligand>
</feature>
<feature type="binding site" evidence="1">
    <location>
        <position position="266"/>
    </location>
    <ligand>
        <name>S-adenosyl-L-methionine</name>
        <dbReference type="ChEBI" id="CHEBI:59789"/>
    </ligand>
</feature>
<feature type="mutagenesis site" description="150-fold decrease in catalytic efficiency but substrate specificity unchanged." evidence="3">
    <original>N</original>
    <variation>E</variation>
    <location>
        <position position="298"/>
    </location>
</feature>
<comment type="function">
    <text evidence="3">Involved in the biosynthesis of acridine alkaloids. N-methyltransferase with a strict substrate specificity for anthranilate. No activity with anthranilic acid methyl ester, anthraniloyl CoA, 3- or 4-amino-benzoic acid, salicylic acid, catechol, eugenol, caffeic acid, quercetin, theobromin, theophyllin, putrescine and nicotinic acid among others.</text>
</comment>
<comment type="catalytic activity">
    <reaction evidence="3">
        <text>anthranilate + S-adenosyl-L-methionine = N-methylanthranilate + S-adenosyl-L-homocysteine + H(+)</text>
        <dbReference type="Rhea" id="RHEA:12180"/>
        <dbReference type="ChEBI" id="CHEBI:15378"/>
        <dbReference type="ChEBI" id="CHEBI:16567"/>
        <dbReference type="ChEBI" id="CHEBI:36557"/>
        <dbReference type="ChEBI" id="CHEBI:57856"/>
        <dbReference type="ChEBI" id="CHEBI:59789"/>
        <dbReference type="EC" id="2.1.1.111"/>
    </reaction>
</comment>
<comment type="activity regulation">
    <text evidence="3">Inhibited by Ca(2+), Co(2+), Fe(2+), Fe(3+), Cu(2+) or Zn(2+). No effect of Mg(2+).</text>
</comment>
<comment type="biophysicochemical properties">
    <kinetics>
        <KM evidence="3">7.1 uM for anthranilate</KM>
        <KM evidence="3">3.3 uM for S-adenosyl-L-methionine</KM>
    </kinetics>
    <phDependence>
        <text evidence="3">Optimum pH is 7.5.</text>
    </phDependence>
    <temperatureDependence>
        <text evidence="3">Optimum temperature is 37 degrees Celsius.</text>
    </temperatureDependence>
</comment>
<comment type="subunit">
    <text evidence="3">Homodimer.</text>
</comment>
<comment type="tissue specificity">
    <text evidence="3">Expressed in leaves, flowers, stems and roots. Detected in the vascular tissues in stems, in the rhizodermis or the endodermis of roots, in the inside of carpels, in the central vascular bundles of the syncarp ovary and in the secretory oil glands located around the outer ovary wall.</text>
</comment>
<comment type="induction">
    <text evidence="3">Up-regulated by yeast elicitor treatment.</text>
</comment>
<comment type="similarity">
    <text evidence="1">Belongs to the class I-like SAM-binding methyltransferase superfamily. Cation-independent O-methyltransferase family. COMT subfamily.</text>
</comment>
<reference key="1">
    <citation type="journal article" date="2008" name="Plant J.">
        <title>Anthranilate N-methyltransferase, a branch-point enzyme of acridone biosynthesis.</title>
        <authorList>
            <person name="Rohde B."/>
            <person name="Hans J."/>
            <person name="Martens S."/>
            <person name="Baumert A."/>
            <person name="Hunziker P."/>
            <person name="Matern U."/>
        </authorList>
    </citation>
    <scope>NUCLEOTIDE SEQUENCE [MRNA]</scope>
    <scope>IDENTIFICATION BY MASS SPECTROMETRY</scope>
    <scope>FUNCTION</scope>
    <scope>CATALYTIC ACTIVITY</scope>
    <scope>ACTIVITY REGULATION</scope>
    <scope>INDUCTION BY ELICITOR</scope>
    <scope>TISSUE SPECIFICITY</scope>
    <scope>MUTAGENESIS OF ASN-298</scope>
    <scope>BIOPHYSICOCHEMICAL PROPERTIES</scope>
    <scope>SUBUNIT</scope>
</reference>
<evidence type="ECO:0000255" key="1">
    <source>
        <dbReference type="PROSITE-ProRule" id="PRU01020"/>
    </source>
</evidence>
<evidence type="ECO:0000256" key="2">
    <source>
        <dbReference type="SAM" id="MobiDB-lite"/>
    </source>
</evidence>
<evidence type="ECO:0000269" key="3">
    <source>
    </source>
</evidence>
<proteinExistence type="evidence at protein level"/>
<organism>
    <name type="scientific">Ruta graveolens</name>
    <name type="common">Common rue</name>
    <dbReference type="NCBI Taxonomy" id="37565"/>
    <lineage>
        <taxon>Eukaryota</taxon>
        <taxon>Viridiplantae</taxon>
        <taxon>Streptophyta</taxon>
        <taxon>Embryophyta</taxon>
        <taxon>Tracheophyta</taxon>
        <taxon>Spermatophyta</taxon>
        <taxon>Magnoliopsida</taxon>
        <taxon>eudicotyledons</taxon>
        <taxon>Gunneridae</taxon>
        <taxon>Pentapetalae</taxon>
        <taxon>rosids</taxon>
        <taxon>malvids</taxon>
        <taxon>Sapindales</taxon>
        <taxon>Rutaceae</taxon>
        <taxon>Rutoideae</taxon>
        <taxon>Ruta</taxon>
    </lineage>
</organism>
<keyword id="KW-0489">Methyltransferase</keyword>
<keyword id="KW-0949">S-adenosyl-L-methionine</keyword>
<keyword id="KW-0808">Transferase</keyword>